<feature type="initiator methionine" description="Removed" evidence="2">
    <location>
        <position position="1"/>
    </location>
</feature>
<feature type="chain" id="PRO_0000250547" description="Pre-mRNA-splicing factor RBM22">
    <location>
        <begin position="2"/>
        <end position="420"/>
    </location>
</feature>
<feature type="domain" description="RRM" evidence="3">
    <location>
        <begin position="232"/>
        <end position="305"/>
    </location>
</feature>
<feature type="zinc finger region" description="C3H1-type" evidence="4">
    <location>
        <begin position="159"/>
        <end position="186"/>
    </location>
</feature>
<feature type="region of interest" description="Disordered" evidence="5">
    <location>
        <begin position="303"/>
        <end position="343"/>
    </location>
</feature>
<feature type="region of interest" description="Disordered" evidence="5">
    <location>
        <begin position="372"/>
        <end position="420"/>
    </location>
</feature>
<feature type="compositionally biased region" description="Basic and acidic residues" evidence="5">
    <location>
        <begin position="309"/>
        <end position="318"/>
    </location>
</feature>
<feature type="modified residue" description="N-acetylalanine" evidence="2">
    <location>
        <position position="2"/>
    </location>
</feature>
<feature type="modified residue" description="Phosphoserine" evidence="2">
    <location>
        <position position="4"/>
    </location>
</feature>
<feature type="modified residue" description="Phosphoserine" evidence="2">
    <location>
        <position position="102"/>
    </location>
</feature>
<feature type="modified residue" description="N6-acetyllysine" evidence="2">
    <location>
        <position position="212"/>
    </location>
</feature>
<feature type="cross-link" description="Glycyl lysine isopeptide (Lys-Gly) (interchain with G-Cter in SUMO2)" evidence="2">
    <location>
        <position position="139"/>
    </location>
</feature>
<feature type="cross-link" description="Glycyl lysine isopeptide (Lys-Gly) (interchain with G-Cter in SUMO2)" evidence="2">
    <location>
        <position position="149"/>
    </location>
</feature>
<feature type="cross-link" description="Glycyl lysine isopeptide (Lys-Gly) (interchain with G-Cter in SUMO2)" evidence="2">
    <location>
        <position position="290"/>
    </location>
</feature>
<proteinExistence type="evidence at transcript level"/>
<evidence type="ECO:0000250" key="1"/>
<evidence type="ECO:0000250" key="2">
    <source>
        <dbReference type="UniProtKB" id="Q9NW64"/>
    </source>
</evidence>
<evidence type="ECO:0000255" key="3">
    <source>
        <dbReference type="PROSITE-ProRule" id="PRU00176"/>
    </source>
</evidence>
<evidence type="ECO:0000255" key="4">
    <source>
        <dbReference type="PROSITE-ProRule" id="PRU00723"/>
    </source>
</evidence>
<evidence type="ECO:0000256" key="5">
    <source>
        <dbReference type="SAM" id="MobiDB-lite"/>
    </source>
</evidence>
<evidence type="ECO:0000305" key="6"/>
<gene>
    <name type="primary">RBM22</name>
    <name type="ORF">QtrA-11334</name>
</gene>
<keyword id="KW-0007">Acetylation</keyword>
<keyword id="KW-0963">Cytoplasm</keyword>
<keyword id="KW-1017">Isopeptide bond</keyword>
<keyword id="KW-0479">Metal-binding</keyword>
<keyword id="KW-0507">mRNA processing</keyword>
<keyword id="KW-0508">mRNA splicing</keyword>
<keyword id="KW-0539">Nucleus</keyword>
<keyword id="KW-0597">Phosphoprotein</keyword>
<keyword id="KW-1185">Reference proteome</keyword>
<keyword id="KW-0694">RNA-binding</keyword>
<keyword id="KW-0747">Spliceosome</keyword>
<keyword id="KW-0813">Transport</keyword>
<keyword id="KW-0832">Ubl conjugation</keyword>
<keyword id="KW-0862">Zinc</keyword>
<keyword id="KW-0863">Zinc-finger</keyword>
<reference key="1">
    <citation type="submission" date="2005-06" db="EMBL/GenBank/DDBJ databases">
        <title>DNA sequences of macaque genes expressed in brain or testis and its evolutionary implications.</title>
        <authorList>
            <consortium name="International consortium for macaque cDNA sequencing and analysis"/>
        </authorList>
    </citation>
    <scope>NUCLEOTIDE SEQUENCE [LARGE SCALE MRNA]</scope>
    <source>
        <tissue>Temporal cortex</tissue>
    </source>
</reference>
<accession>Q4R4J1</accession>
<name>RBM22_MACFA</name>
<dbReference type="EMBL" id="AB169903">
    <property type="protein sequence ID" value="BAE01984.1"/>
    <property type="molecule type" value="mRNA"/>
</dbReference>
<dbReference type="RefSeq" id="NP_001273072.1">
    <property type="nucleotide sequence ID" value="NM_001286143.1"/>
</dbReference>
<dbReference type="RefSeq" id="XP_045250941.1">
    <property type="nucleotide sequence ID" value="XM_045395006.2"/>
</dbReference>
<dbReference type="SMR" id="Q4R4J1"/>
<dbReference type="STRING" id="9541.ENSMFAP00000035159"/>
<dbReference type="GeneID" id="102137387"/>
<dbReference type="VEuPathDB" id="HostDB:ENSMFAG00000004034"/>
<dbReference type="eggNOG" id="KOG0153">
    <property type="taxonomic scope" value="Eukaryota"/>
</dbReference>
<dbReference type="OMA" id="CPLRVQW"/>
<dbReference type="Proteomes" id="UP000233100">
    <property type="component" value="Chromosome 6"/>
</dbReference>
<dbReference type="GO" id="GO:0005737">
    <property type="term" value="C:cytoplasm"/>
    <property type="evidence" value="ECO:0000250"/>
    <property type="project" value="UniProtKB"/>
</dbReference>
<dbReference type="GO" id="GO:0005634">
    <property type="term" value="C:nucleus"/>
    <property type="evidence" value="ECO:0000250"/>
    <property type="project" value="UniProtKB"/>
</dbReference>
<dbReference type="GO" id="GO:0000974">
    <property type="term" value="C:Prp19 complex"/>
    <property type="evidence" value="ECO:0007669"/>
    <property type="project" value="TreeGrafter"/>
</dbReference>
<dbReference type="GO" id="GO:0071006">
    <property type="term" value="C:U2-type catalytic step 1 spliceosome"/>
    <property type="evidence" value="ECO:0007669"/>
    <property type="project" value="TreeGrafter"/>
</dbReference>
<dbReference type="GO" id="GO:0071007">
    <property type="term" value="C:U2-type catalytic step 2 spliceosome"/>
    <property type="evidence" value="ECO:0007669"/>
    <property type="project" value="TreeGrafter"/>
</dbReference>
<dbReference type="GO" id="GO:0036002">
    <property type="term" value="F:pre-mRNA binding"/>
    <property type="evidence" value="ECO:0000250"/>
    <property type="project" value="UniProtKB"/>
</dbReference>
<dbReference type="GO" id="GO:0017070">
    <property type="term" value="F:U6 snRNA binding"/>
    <property type="evidence" value="ECO:0000250"/>
    <property type="project" value="UniProtKB"/>
</dbReference>
<dbReference type="GO" id="GO:0008270">
    <property type="term" value="F:zinc ion binding"/>
    <property type="evidence" value="ECO:0007669"/>
    <property type="project" value="UniProtKB-KW"/>
</dbReference>
<dbReference type="GO" id="GO:0071466">
    <property type="term" value="P:cellular response to xenobiotic stimulus"/>
    <property type="evidence" value="ECO:0000250"/>
    <property type="project" value="UniProtKB"/>
</dbReference>
<dbReference type="GO" id="GO:0045292">
    <property type="term" value="P:mRNA cis splicing, via spliceosome"/>
    <property type="evidence" value="ECO:0000250"/>
    <property type="project" value="UniProtKB"/>
</dbReference>
<dbReference type="GO" id="GO:0046827">
    <property type="term" value="P:positive regulation of protein export from nucleus"/>
    <property type="evidence" value="ECO:0000250"/>
    <property type="project" value="UniProtKB"/>
</dbReference>
<dbReference type="GO" id="GO:0042307">
    <property type="term" value="P:positive regulation of protein import into nucleus"/>
    <property type="evidence" value="ECO:0000250"/>
    <property type="project" value="UniProtKB"/>
</dbReference>
<dbReference type="GO" id="GO:0033120">
    <property type="term" value="P:positive regulation of RNA splicing"/>
    <property type="evidence" value="ECO:0000250"/>
    <property type="project" value="UniProtKB"/>
</dbReference>
<dbReference type="CDD" id="cd12224">
    <property type="entry name" value="RRM_RBM22"/>
    <property type="match status" value="1"/>
</dbReference>
<dbReference type="FunFam" id="3.30.70.330:FF:000137">
    <property type="entry name" value="pre-mRNA-splicing factor RBM22"/>
    <property type="match status" value="1"/>
</dbReference>
<dbReference type="FunFam" id="4.10.1000.10:FF:000006">
    <property type="entry name" value="Putative pre-mrna-splicing factor rbm22"/>
    <property type="match status" value="1"/>
</dbReference>
<dbReference type="Gene3D" id="3.30.70.330">
    <property type="match status" value="1"/>
</dbReference>
<dbReference type="Gene3D" id="4.10.1000.10">
    <property type="entry name" value="Zinc finger, CCCH-type"/>
    <property type="match status" value="1"/>
</dbReference>
<dbReference type="InterPro" id="IPR039171">
    <property type="entry name" value="Cwc2/Slt11"/>
</dbReference>
<dbReference type="InterPro" id="IPR012677">
    <property type="entry name" value="Nucleotide-bd_a/b_plait_sf"/>
</dbReference>
<dbReference type="InterPro" id="IPR035979">
    <property type="entry name" value="RBD_domain_sf"/>
</dbReference>
<dbReference type="InterPro" id="IPR000504">
    <property type="entry name" value="RRM_dom"/>
</dbReference>
<dbReference type="InterPro" id="IPR048995">
    <property type="entry name" value="STL11/RBM22-like_N"/>
</dbReference>
<dbReference type="InterPro" id="IPR000571">
    <property type="entry name" value="Znf_CCCH"/>
</dbReference>
<dbReference type="InterPro" id="IPR036855">
    <property type="entry name" value="Znf_CCCH_sf"/>
</dbReference>
<dbReference type="PANTHER" id="PTHR14089">
    <property type="entry name" value="PRE-MRNA-SPLICING FACTOR RBM22"/>
    <property type="match status" value="1"/>
</dbReference>
<dbReference type="PANTHER" id="PTHR14089:SF18">
    <property type="entry name" value="PRE-MRNA-SPLICING FACTOR RBM22"/>
    <property type="match status" value="1"/>
</dbReference>
<dbReference type="Pfam" id="PF00076">
    <property type="entry name" value="RRM_1"/>
    <property type="match status" value="1"/>
</dbReference>
<dbReference type="Pfam" id="PF21369">
    <property type="entry name" value="STL11_N"/>
    <property type="match status" value="1"/>
</dbReference>
<dbReference type="SMART" id="SM00360">
    <property type="entry name" value="RRM"/>
    <property type="match status" value="1"/>
</dbReference>
<dbReference type="SMART" id="SM00356">
    <property type="entry name" value="ZnF_C3H1"/>
    <property type="match status" value="1"/>
</dbReference>
<dbReference type="SUPFAM" id="SSF90229">
    <property type="entry name" value="CCCH zinc finger"/>
    <property type="match status" value="1"/>
</dbReference>
<dbReference type="SUPFAM" id="SSF54928">
    <property type="entry name" value="RNA-binding domain, RBD"/>
    <property type="match status" value="1"/>
</dbReference>
<dbReference type="PROSITE" id="PS50102">
    <property type="entry name" value="RRM"/>
    <property type="match status" value="1"/>
</dbReference>
<dbReference type="PROSITE" id="PS50103">
    <property type="entry name" value="ZF_C3H1"/>
    <property type="match status" value="1"/>
</dbReference>
<comment type="function">
    <text evidence="2">Required for pre-mRNA splicing as component of the activated spliceosome. Involved in the first step of pre-mRNA splicing. Binds directly to the internal stem-loop (ISL) domain of the U6 snRNA and to the pre-mRNA intron near the 5' splice site during the activation and catalytic phases of the spliceosome cycle. Involved in both translocations of the nuclear SLU7 to the cytoplasm and the cytosolic calcium-binding protein PDCD6 to the nucleus upon cellular stress responses.</text>
</comment>
<comment type="subunit">
    <text evidence="2">Component of the pre-catalytic and catalytic spliceosome complexes. Component of the postcatalytic spliceosome P complex. Interacts with PDCD6; the interaction induces translocation of PDCD6 in the cytoplasm. Interacts with PPIL1 (By similarity).</text>
</comment>
<comment type="subcellular location">
    <subcellularLocation>
        <location evidence="2">Nucleus</location>
    </subcellularLocation>
    <subcellularLocation>
        <location evidence="2">Cytoplasm</location>
    </subcellularLocation>
    <text evidence="2">Nearly exclusively nuclear. Translocated from the nucleus to the cytoplasm after heat shock cell treatment. May be shuttling between the nucleus and the cytosol.</text>
</comment>
<comment type="domain">
    <text evidence="1">The C-terminal RRM domain and the zinc finger motif are necessary for RNA-binding.</text>
</comment>
<comment type="similarity">
    <text evidence="6">Belongs to the SLT11 family.</text>
</comment>
<organism>
    <name type="scientific">Macaca fascicularis</name>
    <name type="common">Crab-eating macaque</name>
    <name type="synonym">Cynomolgus monkey</name>
    <dbReference type="NCBI Taxonomy" id="9541"/>
    <lineage>
        <taxon>Eukaryota</taxon>
        <taxon>Metazoa</taxon>
        <taxon>Chordata</taxon>
        <taxon>Craniata</taxon>
        <taxon>Vertebrata</taxon>
        <taxon>Euteleostomi</taxon>
        <taxon>Mammalia</taxon>
        <taxon>Eutheria</taxon>
        <taxon>Euarchontoglires</taxon>
        <taxon>Primates</taxon>
        <taxon>Haplorrhini</taxon>
        <taxon>Catarrhini</taxon>
        <taxon>Cercopithecidae</taxon>
        <taxon>Cercopithecinae</taxon>
        <taxon>Macaca</taxon>
    </lineage>
</organism>
<protein>
    <recommendedName>
        <fullName>Pre-mRNA-splicing factor RBM22</fullName>
    </recommendedName>
    <alternativeName>
        <fullName>RNA-binding motif protein 22</fullName>
    </alternativeName>
</protein>
<sequence length="420" mass="46896">MATSLGSNTYNRQNWEDADFPILCQTCLGENPYIRMTKEKYGKECKICARPFTVFRWCPGVRMRFKKTEVCQTCSKLKNVCQTCLLDLEYGLPIQVRDAGLSFKDDMPKSDVNKEYYTQNMEREISNSDGTRPVGMLGKATSTSDMLLKLARTTPYYKRNRPHICSFWVKGECKRGEECPYRHEKPTDPDDPLADQNIKDRYYGINDPVADKLLKRASTMPRLDPPEDKTITTLYVGGLGDTITETDLRNHFYQFGEIRTITVVQRQQCAFIQFATRQAAEVAAEKSFNKLIVNGRRLNVKWGRSQAARGKEKEKDGTTDSGIKLEPVPGLPGALPPPPAAEEEASANYFNLPPSGPPAVVNIALPPPPGIAPPPPPGFGPHMFHPMGPPPPFMRAPGPIHYPSQDPQRMGAHAGKHSSP</sequence>